<sequence length="444" mass="48237">MHPHDQTIFALSSGRLPSAIAIVRLSGPHAGAALQMLAGKMPAPRLVTRALLRDPQGEPIDDAVVLWFPAPASATGENVVELHIHGSRAVIATLFGVLSETPELRPAEPGEFTRRAFENGKLDLTEAEGLDDLIHADTDRQRRQALRQLKGLLGDKVRRWREQIIEAAALIEAGIDFSDEGDVPAELLAPALSRVQQLLLEIEAVLAAQGRAERLRDGLTVVIAGPPNAGKSTLMNQLARREVAIVSPQAGTTRDLIEVQLDLDGYPVTVIDTAGIRETDDPVEQEGVRRARDRAAHADLVLWLSEHDGAEVERQGETPLWLVRTKTDLDGAERATRPDTKASRTFGISARSGAGMGALLDALVGFARNFFGSTESGLITRERQRQSLRQTADALQRSLDTVDLGEELVAEELRIAALALGRLLGRVDVEDLLDVIFREFCIGK</sequence>
<keyword id="KW-0963">Cytoplasm</keyword>
<keyword id="KW-0342">GTP-binding</keyword>
<keyword id="KW-0378">Hydrolase</keyword>
<keyword id="KW-0460">Magnesium</keyword>
<keyword id="KW-0479">Metal-binding</keyword>
<keyword id="KW-0547">Nucleotide-binding</keyword>
<keyword id="KW-0630">Potassium</keyword>
<keyword id="KW-1185">Reference proteome</keyword>
<keyword id="KW-0819">tRNA processing</keyword>
<name>MNME_BRASO</name>
<reference key="1">
    <citation type="journal article" date="2007" name="Science">
        <title>Legumes symbioses: absence of nod genes in photosynthetic bradyrhizobia.</title>
        <authorList>
            <person name="Giraud E."/>
            <person name="Moulin L."/>
            <person name="Vallenet D."/>
            <person name="Barbe V."/>
            <person name="Cytryn E."/>
            <person name="Avarre J.-C."/>
            <person name="Jaubert M."/>
            <person name="Simon D."/>
            <person name="Cartieaux F."/>
            <person name="Prin Y."/>
            <person name="Bena G."/>
            <person name="Hannibal L."/>
            <person name="Fardoux J."/>
            <person name="Kojadinovic M."/>
            <person name="Vuillet L."/>
            <person name="Lajus A."/>
            <person name="Cruveiller S."/>
            <person name="Rouy Z."/>
            <person name="Mangenot S."/>
            <person name="Segurens B."/>
            <person name="Dossat C."/>
            <person name="Franck W.L."/>
            <person name="Chang W.-S."/>
            <person name="Saunders E."/>
            <person name="Bruce D."/>
            <person name="Richardson P."/>
            <person name="Normand P."/>
            <person name="Dreyfus B."/>
            <person name="Pignol D."/>
            <person name="Stacey G."/>
            <person name="Emerich D."/>
            <person name="Vermeglio A."/>
            <person name="Medigue C."/>
            <person name="Sadowsky M."/>
        </authorList>
    </citation>
    <scope>NUCLEOTIDE SEQUENCE [LARGE SCALE GENOMIC DNA]</scope>
    <source>
        <strain>ORS 278</strain>
    </source>
</reference>
<organism>
    <name type="scientific">Bradyrhizobium sp. (strain ORS 278)</name>
    <dbReference type="NCBI Taxonomy" id="114615"/>
    <lineage>
        <taxon>Bacteria</taxon>
        <taxon>Pseudomonadati</taxon>
        <taxon>Pseudomonadota</taxon>
        <taxon>Alphaproteobacteria</taxon>
        <taxon>Hyphomicrobiales</taxon>
        <taxon>Nitrobacteraceae</taxon>
        <taxon>Bradyrhizobium</taxon>
    </lineage>
</organism>
<protein>
    <recommendedName>
        <fullName evidence="1">tRNA modification GTPase MnmE</fullName>
        <ecNumber evidence="1">3.6.-.-</ecNumber>
    </recommendedName>
</protein>
<dbReference type="EC" id="3.6.-.-" evidence="1"/>
<dbReference type="EMBL" id="CU234118">
    <property type="protein sequence ID" value="CAL74161.1"/>
    <property type="molecule type" value="Genomic_DNA"/>
</dbReference>
<dbReference type="RefSeq" id="WP_011923451.1">
    <property type="nucleotide sequence ID" value="NC_009445.1"/>
</dbReference>
<dbReference type="SMR" id="A4YJT5"/>
<dbReference type="STRING" id="114615.BRADO0196"/>
<dbReference type="KEGG" id="bra:BRADO0196"/>
<dbReference type="eggNOG" id="COG0486">
    <property type="taxonomic scope" value="Bacteria"/>
</dbReference>
<dbReference type="HOGENOM" id="CLU_019624_3_1_5"/>
<dbReference type="OrthoDB" id="9805918at2"/>
<dbReference type="Proteomes" id="UP000001994">
    <property type="component" value="Chromosome"/>
</dbReference>
<dbReference type="GO" id="GO:0005737">
    <property type="term" value="C:cytoplasm"/>
    <property type="evidence" value="ECO:0007669"/>
    <property type="project" value="UniProtKB-SubCell"/>
</dbReference>
<dbReference type="GO" id="GO:0005525">
    <property type="term" value="F:GTP binding"/>
    <property type="evidence" value="ECO:0007669"/>
    <property type="project" value="UniProtKB-UniRule"/>
</dbReference>
<dbReference type="GO" id="GO:0003924">
    <property type="term" value="F:GTPase activity"/>
    <property type="evidence" value="ECO:0007669"/>
    <property type="project" value="UniProtKB-UniRule"/>
</dbReference>
<dbReference type="GO" id="GO:0046872">
    <property type="term" value="F:metal ion binding"/>
    <property type="evidence" value="ECO:0007669"/>
    <property type="project" value="UniProtKB-KW"/>
</dbReference>
<dbReference type="GO" id="GO:0030488">
    <property type="term" value="P:tRNA methylation"/>
    <property type="evidence" value="ECO:0007669"/>
    <property type="project" value="TreeGrafter"/>
</dbReference>
<dbReference type="GO" id="GO:0002098">
    <property type="term" value="P:tRNA wobble uridine modification"/>
    <property type="evidence" value="ECO:0007669"/>
    <property type="project" value="TreeGrafter"/>
</dbReference>
<dbReference type="CDD" id="cd04164">
    <property type="entry name" value="trmE"/>
    <property type="match status" value="1"/>
</dbReference>
<dbReference type="CDD" id="cd14858">
    <property type="entry name" value="TrmE_N"/>
    <property type="match status" value="1"/>
</dbReference>
<dbReference type="FunFam" id="3.30.1360.120:FF:000007">
    <property type="entry name" value="tRNA modification GTPase GTPBP3, mitochondrial"/>
    <property type="match status" value="1"/>
</dbReference>
<dbReference type="Gene3D" id="3.40.50.300">
    <property type="entry name" value="P-loop containing nucleotide triphosphate hydrolases"/>
    <property type="match status" value="1"/>
</dbReference>
<dbReference type="Gene3D" id="3.30.1360.120">
    <property type="entry name" value="Probable tRNA modification gtpase trme, domain 1"/>
    <property type="match status" value="1"/>
</dbReference>
<dbReference type="Gene3D" id="1.20.120.430">
    <property type="entry name" value="tRNA modification GTPase MnmE domain 2"/>
    <property type="match status" value="1"/>
</dbReference>
<dbReference type="HAMAP" id="MF_00379">
    <property type="entry name" value="GTPase_MnmE"/>
    <property type="match status" value="1"/>
</dbReference>
<dbReference type="InterPro" id="IPR031168">
    <property type="entry name" value="G_TrmE"/>
</dbReference>
<dbReference type="InterPro" id="IPR006073">
    <property type="entry name" value="GTP-bd"/>
</dbReference>
<dbReference type="InterPro" id="IPR018948">
    <property type="entry name" value="GTP-bd_TrmE_N"/>
</dbReference>
<dbReference type="InterPro" id="IPR004520">
    <property type="entry name" value="GTPase_MnmE"/>
</dbReference>
<dbReference type="InterPro" id="IPR027368">
    <property type="entry name" value="MnmE_dom2"/>
</dbReference>
<dbReference type="InterPro" id="IPR025867">
    <property type="entry name" value="MnmE_helical"/>
</dbReference>
<dbReference type="InterPro" id="IPR027417">
    <property type="entry name" value="P-loop_NTPase"/>
</dbReference>
<dbReference type="InterPro" id="IPR005225">
    <property type="entry name" value="Small_GTP-bd"/>
</dbReference>
<dbReference type="InterPro" id="IPR027266">
    <property type="entry name" value="TrmE/GcvT_dom1"/>
</dbReference>
<dbReference type="NCBIfam" id="TIGR00450">
    <property type="entry name" value="mnmE_trmE_thdF"/>
    <property type="match status" value="1"/>
</dbReference>
<dbReference type="NCBIfam" id="NF003661">
    <property type="entry name" value="PRK05291.1-3"/>
    <property type="match status" value="1"/>
</dbReference>
<dbReference type="NCBIfam" id="TIGR00231">
    <property type="entry name" value="small_GTP"/>
    <property type="match status" value="1"/>
</dbReference>
<dbReference type="PANTHER" id="PTHR42714">
    <property type="entry name" value="TRNA MODIFICATION GTPASE GTPBP3"/>
    <property type="match status" value="1"/>
</dbReference>
<dbReference type="PANTHER" id="PTHR42714:SF2">
    <property type="entry name" value="TRNA MODIFICATION GTPASE GTPBP3, MITOCHONDRIAL"/>
    <property type="match status" value="1"/>
</dbReference>
<dbReference type="Pfam" id="PF01926">
    <property type="entry name" value="MMR_HSR1"/>
    <property type="match status" value="1"/>
</dbReference>
<dbReference type="Pfam" id="PF12631">
    <property type="entry name" value="MnmE_helical"/>
    <property type="match status" value="1"/>
</dbReference>
<dbReference type="Pfam" id="PF10396">
    <property type="entry name" value="TrmE_N"/>
    <property type="match status" value="1"/>
</dbReference>
<dbReference type="SUPFAM" id="SSF52540">
    <property type="entry name" value="P-loop containing nucleoside triphosphate hydrolases"/>
    <property type="match status" value="1"/>
</dbReference>
<dbReference type="SUPFAM" id="SSF116878">
    <property type="entry name" value="TrmE connector domain"/>
    <property type="match status" value="1"/>
</dbReference>
<dbReference type="PROSITE" id="PS51709">
    <property type="entry name" value="G_TRME"/>
    <property type="match status" value="1"/>
</dbReference>
<proteinExistence type="inferred from homology"/>
<evidence type="ECO:0000255" key="1">
    <source>
        <dbReference type="HAMAP-Rule" id="MF_00379"/>
    </source>
</evidence>
<gene>
    <name evidence="1" type="primary">mnmE</name>
    <name evidence="1" type="synonym">trmE</name>
    <name type="ordered locus">BRADO0196</name>
</gene>
<accession>A4YJT5</accession>
<comment type="function">
    <text evidence="1">Exhibits a very high intrinsic GTPase hydrolysis rate. Involved in the addition of a carboxymethylaminomethyl (cmnm) group at the wobble position (U34) of certain tRNAs, forming tRNA-cmnm(5)s(2)U34.</text>
</comment>
<comment type="cofactor">
    <cofactor evidence="1">
        <name>K(+)</name>
        <dbReference type="ChEBI" id="CHEBI:29103"/>
    </cofactor>
    <text evidence="1">Binds 1 potassium ion per subunit.</text>
</comment>
<comment type="subunit">
    <text evidence="1">Homodimer. Heterotetramer of two MnmE and two MnmG subunits.</text>
</comment>
<comment type="subcellular location">
    <subcellularLocation>
        <location evidence="1">Cytoplasm</location>
    </subcellularLocation>
</comment>
<comment type="similarity">
    <text evidence="1">Belongs to the TRAFAC class TrmE-Era-EngA-EngB-Septin-like GTPase superfamily. TrmE GTPase family.</text>
</comment>
<feature type="chain" id="PRO_0000345726" description="tRNA modification GTPase MnmE">
    <location>
        <begin position="1"/>
        <end position="444"/>
    </location>
</feature>
<feature type="domain" description="TrmE-type G">
    <location>
        <begin position="218"/>
        <end position="368"/>
    </location>
</feature>
<feature type="binding site" evidence="1">
    <location>
        <position position="24"/>
    </location>
    <ligand>
        <name>(6S)-5-formyl-5,6,7,8-tetrahydrofolate</name>
        <dbReference type="ChEBI" id="CHEBI:57457"/>
    </ligand>
</feature>
<feature type="binding site" evidence="1">
    <location>
        <position position="81"/>
    </location>
    <ligand>
        <name>(6S)-5-formyl-5,6,7,8-tetrahydrofolate</name>
        <dbReference type="ChEBI" id="CHEBI:57457"/>
    </ligand>
</feature>
<feature type="binding site" evidence="1">
    <location>
        <position position="121"/>
    </location>
    <ligand>
        <name>(6S)-5-formyl-5,6,7,8-tetrahydrofolate</name>
        <dbReference type="ChEBI" id="CHEBI:57457"/>
    </ligand>
</feature>
<feature type="binding site" evidence="1">
    <location>
        <begin position="228"/>
        <end position="233"/>
    </location>
    <ligand>
        <name>GTP</name>
        <dbReference type="ChEBI" id="CHEBI:37565"/>
    </ligand>
</feature>
<feature type="binding site" evidence="1">
    <location>
        <position position="232"/>
    </location>
    <ligand>
        <name>Mg(2+)</name>
        <dbReference type="ChEBI" id="CHEBI:18420"/>
    </ligand>
</feature>
<feature type="binding site" evidence="1">
    <location>
        <begin position="247"/>
        <end position="253"/>
    </location>
    <ligand>
        <name>GTP</name>
        <dbReference type="ChEBI" id="CHEBI:37565"/>
    </ligand>
</feature>
<feature type="binding site" evidence="1">
    <location>
        <position position="253"/>
    </location>
    <ligand>
        <name>Mg(2+)</name>
        <dbReference type="ChEBI" id="CHEBI:18420"/>
    </ligand>
</feature>
<feature type="binding site" evidence="1">
    <location>
        <begin position="272"/>
        <end position="275"/>
    </location>
    <ligand>
        <name>GTP</name>
        <dbReference type="ChEBI" id="CHEBI:37565"/>
    </ligand>
</feature>
<feature type="binding site" evidence="1">
    <location>
        <begin position="349"/>
        <end position="351"/>
    </location>
    <ligand>
        <name>GTP</name>
        <dbReference type="ChEBI" id="CHEBI:37565"/>
    </ligand>
</feature>
<feature type="binding site" evidence="1">
    <location>
        <position position="444"/>
    </location>
    <ligand>
        <name>(6S)-5-formyl-5,6,7,8-tetrahydrofolate</name>
        <dbReference type="ChEBI" id="CHEBI:57457"/>
    </ligand>
</feature>